<name>GUAA_ECOUT</name>
<organism>
    <name type="scientific">Escherichia coli (strain UTI89 / UPEC)</name>
    <dbReference type="NCBI Taxonomy" id="364106"/>
    <lineage>
        <taxon>Bacteria</taxon>
        <taxon>Pseudomonadati</taxon>
        <taxon>Pseudomonadota</taxon>
        <taxon>Gammaproteobacteria</taxon>
        <taxon>Enterobacterales</taxon>
        <taxon>Enterobacteriaceae</taxon>
        <taxon>Escherichia</taxon>
    </lineage>
</organism>
<keyword id="KW-0067">ATP-binding</keyword>
<keyword id="KW-0315">Glutamine amidotransferase</keyword>
<keyword id="KW-0332">GMP biosynthesis</keyword>
<keyword id="KW-0436">Ligase</keyword>
<keyword id="KW-0547">Nucleotide-binding</keyword>
<keyword id="KW-0658">Purine biosynthesis</keyword>
<protein>
    <recommendedName>
        <fullName evidence="1">GMP synthase [glutamine-hydrolyzing]</fullName>
        <ecNumber evidence="1">6.3.5.2</ecNumber>
    </recommendedName>
    <alternativeName>
        <fullName evidence="1">GMP synthetase</fullName>
    </alternativeName>
    <alternativeName>
        <fullName evidence="1">Glutamine amidotransferase</fullName>
    </alternativeName>
</protein>
<evidence type="ECO:0000255" key="1">
    <source>
        <dbReference type="HAMAP-Rule" id="MF_00344"/>
    </source>
</evidence>
<comment type="function">
    <text evidence="1">Catalyzes the synthesis of GMP from XMP.</text>
</comment>
<comment type="catalytic activity">
    <reaction evidence="1">
        <text>XMP + L-glutamine + ATP + H2O = GMP + L-glutamate + AMP + diphosphate + 2 H(+)</text>
        <dbReference type="Rhea" id="RHEA:11680"/>
        <dbReference type="ChEBI" id="CHEBI:15377"/>
        <dbReference type="ChEBI" id="CHEBI:15378"/>
        <dbReference type="ChEBI" id="CHEBI:29985"/>
        <dbReference type="ChEBI" id="CHEBI:30616"/>
        <dbReference type="ChEBI" id="CHEBI:33019"/>
        <dbReference type="ChEBI" id="CHEBI:57464"/>
        <dbReference type="ChEBI" id="CHEBI:58115"/>
        <dbReference type="ChEBI" id="CHEBI:58359"/>
        <dbReference type="ChEBI" id="CHEBI:456215"/>
        <dbReference type="EC" id="6.3.5.2"/>
    </reaction>
</comment>
<comment type="pathway">
    <text evidence="1">Purine metabolism; GMP biosynthesis; GMP from XMP (L-Gln route): step 1/1.</text>
</comment>
<comment type="subunit">
    <text evidence="1">Homodimer.</text>
</comment>
<sequence>MTENIHKHRILILDFGSQYTQLVARRVRELGVYCELWAWDVTEAQIRDFNPSGIILSGGPESTTEENSPRAPQYVFEAGVPVFGVCYGMQTMAMQLGGHVEASNEREFGYAQVEVVNDSALVRGIEDALTADGKPLLDVWMSHGDKVTAIPSDFVTVASTESCPFAIMANEEKRFYGVQFHPEVTHTRQGMRMLERFVRDICQCEALWTPAKIIDDAVARIREQVGDDKVILGLSGGVDSSVTAMLLHRAIGKNLTCVFVDNGLLRLNEAEQVLDMFGDHFGLNIVHVPAEDRFLSALAGENDPEAKRKIIGRVFVEVFDEEALKLEDVKWLAQGTIYPDVIESAASATGKAHVIKSHHNVGGLPKEMKMGLVEPLKELFKDEVRKIGLELGLPYDMLYRHPFPGPGLGVRVLGEVKKEYCDLLRRADAIFIEELRKADLYDKVSQAFTVFLPVRSVGVMGDGRKYDWVVSLRAVETIDFMTAHWAHLPYDFLGRVSNRIINEVNGISRVVYDISGKPPATIEWE</sequence>
<feature type="chain" id="PRO_1000120291" description="GMP synthase [glutamine-hydrolyzing]">
    <location>
        <begin position="1"/>
        <end position="525"/>
    </location>
</feature>
<feature type="domain" description="Glutamine amidotransferase type-1" evidence="1">
    <location>
        <begin position="9"/>
        <end position="207"/>
    </location>
</feature>
<feature type="domain" description="GMPS ATP-PPase" evidence="1">
    <location>
        <begin position="208"/>
        <end position="400"/>
    </location>
</feature>
<feature type="active site" description="Nucleophile" evidence="1">
    <location>
        <position position="86"/>
    </location>
</feature>
<feature type="active site" evidence="1">
    <location>
        <position position="181"/>
    </location>
</feature>
<feature type="active site" evidence="1">
    <location>
        <position position="183"/>
    </location>
</feature>
<feature type="binding site" evidence="1">
    <location>
        <begin position="235"/>
        <end position="241"/>
    </location>
    <ligand>
        <name>ATP</name>
        <dbReference type="ChEBI" id="CHEBI:30616"/>
    </ligand>
</feature>
<accession>Q1R8M9</accession>
<dbReference type="EC" id="6.3.5.2" evidence="1"/>
<dbReference type="EMBL" id="CP000243">
    <property type="protein sequence ID" value="ABE08285.1"/>
    <property type="molecule type" value="Genomic_DNA"/>
</dbReference>
<dbReference type="RefSeq" id="WP_000138282.1">
    <property type="nucleotide sequence ID" value="NZ_CP064825.1"/>
</dbReference>
<dbReference type="SMR" id="Q1R8M9"/>
<dbReference type="MEROPS" id="C26.957"/>
<dbReference type="GeneID" id="75172615"/>
<dbReference type="KEGG" id="eci:UTI89_C2825"/>
<dbReference type="HOGENOM" id="CLU_014340_0_5_6"/>
<dbReference type="UniPathway" id="UPA00189">
    <property type="reaction ID" value="UER00296"/>
</dbReference>
<dbReference type="Proteomes" id="UP000001952">
    <property type="component" value="Chromosome"/>
</dbReference>
<dbReference type="GO" id="GO:0005829">
    <property type="term" value="C:cytosol"/>
    <property type="evidence" value="ECO:0007669"/>
    <property type="project" value="TreeGrafter"/>
</dbReference>
<dbReference type="GO" id="GO:0005524">
    <property type="term" value="F:ATP binding"/>
    <property type="evidence" value="ECO:0007669"/>
    <property type="project" value="UniProtKB-UniRule"/>
</dbReference>
<dbReference type="GO" id="GO:0003921">
    <property type="term" value="F:GMP synthase activity"/>
    <property type="evidence" value="ECO:0007669"/>
    <property type="project" value="InterPro"/>
</dbReference>
<dbReference type="CDD" id="cd01742">
    <property type="entry name" value="GATase1_GMP_Synthase"/>
    <property type="match status" value="1"/>
</dbReference>
<dbReference type="CDD" id="cd01997">
    <property type="entry name" value="GMP_synthase_C"/>
    <property type="match status" value="1"/>
</dbReference>
<dbReference type="FunFam" id="3.30.300.10:FF:000002">
    <property type="entry name" value="GMP synthase [glutamine-hydrolyzing]"/>
    <property type="match status" value="1"/>
</dbReference>
<dbReference type="FunFam" id="3.40.50.620:FF:000001">
    <property type="entry name" value="GMP synthase [glutamine-hydrolyzing]"/>
    <property type="match status" value="1"/>
</dbReference>
<dbReference type="FunFam" id="3.40.50.880:FF:000001">
    <property type="entry name" value="GMP synthase [glutamine-hydrolyzing]"/>
    <property type="match status" value="1"/>
</dbReference>
<dbReference type="Gene3D" id="3.30.300.10">
    <property type="match status" value="1"/>
</dbReference>
<dbReference type="Gene3D" id="3.40.50.880">
    <property type="match status" value="1"/>
</dbReference>
<dbReference type="Gene3D" id="3.40.50.620">
    <property type="entry name" value="HUPs"/>
    <property type="match status" value="1"/>
</dbReference>
<dbReference type="HAMAP" id="MF_00344">
    <property type="entry name" value="GMP_synthase"/>
    <property type="match status" value="1"/>
</dbReference>
<dbReference type="InterPro" id="IPR029062">
    <property type="entry name" value="Class_I_gatase-like"/>
</dbReference>
<dbReference type="InterPro" id="IPR017926">
    <property type="entry name" value="GATASE"/>
</dbReference>
<dbReference type="InterPro" id="IPR001674">
    <property type="entry name" value="GMP_synth_C"/>
</dbReference>
<dbReference type="InterPro" id="IPR004739">
    <property type="entry name" value="GMP_synth_GATase"/>
</dbReference>
<dbReference type="InterPro" id="IPR022955">
    <property type="entry name" value="GMP_synthase"/>
</dbReference>
<dbReference type="InterPro" id="IPR025777">
    <property type="entry name" value="GMPS_ATP_PPase_dom"/>
</dbReference>
<dbReference type="InterPro" id="IPR022310">
    <property type="entry name" value="NAD/GMP_synthase"/>
</dbReference>
<dbReference type="InterPro" id="IPR014729">
    <property type="entry name" value="Rossmann-like_a/b/a_fold"/>
</dbReference>
<dbReference type="NCBIfam" id="TIGR00884">
    <property type="entry name" value="guaA_Cterm"/>
    <property type="match status" value="1"/>
</dbReference>
<dbReference type="NCBIfam" id="TIGR00888">
    <property type="entry name" value="guaA_Nterm"/>
    <property type="match status" value="1"/>
</dbReference>
<dbReference type="NCBIfam" id="NF000848">
    <property type="entry name" value="PRK00074.1"/>
    <property type="match status" value="1"/>
</dbReference>
<dbReference type="PANTHER" id="PTHR11922:SF2">
    <property type="entry name" value="GMP SYNTHASE [GLUTAMINE-HYDROLYZING]"/>
    <property type="match status" value="1"/>
</dbReference>
<dbReference type="PANTHER" id="PTHR11922">
    <property type="entry name" value="GMP SYNTHASE-RELATED"/>
    <property type="match status" value="1"/>
</dbReference>
<dbReference type="Pfam" id="PF00117">
    <property type="entry name" value="GATase"/>
    <property type="match status" value="1"/>
</dbReference>
<dbReference type="Pfam" id="PF00958">
    <property type="entry name" value="GMP_synt_C"/>
    <property type="match status" value="1"/>
</dbReference>
<dbReference type="Pfam" id="PF02540">
    <property type="entry name" value="NAD_synthase"/>
    <property type="match status" value="1"/>
</dbReference>
<dbReference type="PRINTS" id="PR00097">
    <property type="entry name" value="ANTSNTHASEII"/>
</dbReference>
<dbReference type="PRINTS" id="PR00099">
    <property type="entry name" value="CPSGATASE"/>
</dbReference>
<dbReference type="PRINTS" id="PR00096">
    <property type="entry name" value="GATASE"/>
</dbReference>
<dbReference type="SUPFAM" id="SSF52402">
    <property type="entry name" value="Adenine nucleotide alpha hydrolases-like"/>
    <property type="match status" value="1"/>
</dbReference>
<dbReference type="SUPFAM" id="SSF52317">
    <property type="entry name" value="Class I glutamine amidotransferase-like"/>
    <property type="match status" value="1"/>
</dbReference>
<dbReference type="SUPFAM" id="SSF54810">
    <property type="entry name" value="GMP synthetase C-terminal dimerisation domain"/>
    <property type="match status" value="1"/>
</dbReference>
<dbReference type="PROSITE" id="PS51273">
    <property type="entry name" value="GATASE_TYPE_1"/>
    <property type="match status" value="1"/>
</dbReference>
<dbReference type="PROSITE" id="PS51553">
    <property type="entry name" value="GMPS_ATP_PPASE"/>
    <property type="match status" value="1"/>
</dbReference>
<gene>
    <name evidence="1" type="primary">guaA</name>
    <name type="ordered locus">UTI89_C2825</name>
</gene>
<reference key="1">
    <citation type="journal article" date="2006" name="Proc. Natl. Acad. Sci. U.S.A.">
        <title>Identification of genes subject to positive selection in uropathogenic strains of Escherichia coli: a comparative genomics approach.</title>
        <authorList>
            <person name="Chen S.L."/>
            <person name="Hung C.-S."/>
            <person name="Xu J."/>
            <person name="Reigstad C.S."/>
            <person name="Magrini V."/>
            <person name="Sabo A."/>
            <person name="Blasiar D."/>
            <person name="Bieri T."/>
            <person name="Meyer R.R."/>
            <person name="Ozersky P."/>
            <person name="Armstrong J.R."/>
            <person name="Fulton R.S."/>
            <person name="Latreille J.P."/>
            <person name="Spieth J."/>
            <person name="Hooton T.M."/>
            <person name="Mardis E.R."/>
            <person name="Hultgren S.J."/>
            <person name="Gordon J.I."/>
        </authorList>
    </citation>
    <scope>NUCLEOTIDE SEQUENCE [LARGE SCALE GENOMIC DNA]</scope>
    <source>
        <strain>UTI89 / UPEC</strain>
    </source>
</reference>
<proteinExistence type="inferred from homology"/>